<sequence>MNKIESITEDLITPIVEAEQFELVDIEFKKEGPHKYLRVYIDKPGGITLDDCQKVSEGLSKKLDEADPIVENYFLEVSSPGLDRPLKREVDFLKFKGEMIELKLYEAIDGQKTIEGELVGLIDDKIVIKISETEEVEMPREKVAITKLAIKF</sequence>
<reference key="1">
    <citation type="journal article" date="2016" name="Genome Announc.">
        <title>Complete genome sequence of Alkaliphilus metalliredigens strain QYMF, an alkaliphilic and metal-reducing bacterium isolated from borax-contaminated leachate ponds.</title>
        <authorList>
            <person name="Hwang C."/>
            <person name="Copeland A."/>
            <person name="Lucas S."/>
            <person name="Lapidus A."/>
            <person name="Barry K."/>
            <person name="Detter J.C."/>
            <person name="Glavina Del Rio T."/>
            <person name="Hammon N."/>
            <person name="Israni S."/>
            <person name="Dalin E."/>
            <person name="Tice H."/>
            <person name="Pitluck S."/>
            <person name="Chertkov O."/>
            <person name="Brettin T."/>
            <person name="Bruce D."/>
            <person name="Han C."/>
            <person name="Schmutz J."/>
            <person name="Larimer F."/>
            <person name="Land M.L."/>
            <person name="Hauser L."/>
            <person name="Kyrpides N."/>
            <person name="Mikhailova N."/>
            <person name="Ye Q."/>
            <person name="Zhou J."/>
            <person name="Richardson P."/>
            <person name="Fields M.W."/>
        </authorList>
    </citation>
    <scope>NUCLEOTIDE SEQUENCE [LARGE SCALE GENOMIC DNA]</scope>
    <source>
        <strain>QYMF</strain>
    </source>
</reference>
<feature type="chain" id="PRO_0000384596" description="Ribosome maturation factor RimP">
    <location>
        <begin position="1"/>
        <end position="152"/>
    </location>
</feature>
<accession>A6TRL1</accession>
<protein>
    <recommendedName>
        <fullName evidence="1">Ribosome maturation factor RimP</fullName>
    </recommendedName>
</protein>
<gene>
    <name evidence="1" type="primary">rimP</name>
    <name type="ordered locus">Amet_2677</name>
</gene>
<keyword id="KW-0963">Cytoplasm</keyword>
<keyword id="KW-1185">Reference proteome</keyword>
<keyword id="KW-0690">Ribosome biogenesis</keyword>
<name>RIMP_ALKMQ</name>
<dbReference type="EMBL" id="CP000724">
    <property type="protein sequence ID" value="ABR48829.1"/>
    <property type="molecule type" value="Genomic_DNA"/>
</dbReference>
<dbReference type="RefSeq" id="WP_012063802.1">
    <property type="nucleotide sequence ID" value="NC_009633.1"/>
</dbReference>
<dbReference type="SMR" id="A6TRL1"/>
<dbReference type="STRING" id="293826.Amet_2677"/>
<dbReference type="KEGG" id="amt:Amet_2677"/>
<dbReference type="eggNOG" id="COG0779">
    <property type="taxonomic scope" value="Bacteria"/>
</dbReference>
<dbReference type="HOGENOM" id="CLU_070525_2_0_9"/>
<dbReference type="OrthoDB" id="9805006at2"/>
<dbReference type="Proteomes" id="UP000001572">
    <property type="component" value="Chromosome"/>
</dbReference>
<dbReference type="GO" id="GO:0005829">
    <property type="term" value="C:cytosol"/>
    <property type="evidence" value="ECO:0007669"/>
    <property type="project" value="TreeGrafter"/>
</dbReference>
<dbReference type="GO" id="GO:0000028">
    <property type="term" value="P:ribosomal small subunit assembly"/>
    <property type="evidence" value="ECO:0007669"/>
    <property type="project" value="TreeGrafter"/>
</dbReference>
<dbReference type="GO" id="GO:0006412">
    <property type="term" value="P:translation"/>
    <property type="evidence" value="ECO:0007669"/>
    <property type="project" value="TreeGrafter"/>
</dbReference>
<dbReference type="CDD" id="cd01734">
    <property type="entry name" value="YlxS_C"/>
    <property type="match status" value="1"/>
</dbReference>
<dbReference type="FunFam" id="3.30.300.70:FF:000001">
    <property type="entry name" value="Ribosome maturation factor RimP"/>
    <property type="match status" value="1"/>
</dbReference>
<dbReference type="Gene3D" id="2.30.30.180">
    <property type="entry name" value="Ribosome maturation factor RimP, C-terminal domain"/>
    <property type="match status" value="1"/>
</dbReference>
<dbReference type="Gene3D" id="3.30.300.70">
    <property type="entry name" value="RimP-like superfamily, N-terminal"/>
    <property type="match status" value="1"/>
</dbReference>
<dbReference type="HAMAP" id="MF_01077">
    <property type="entry name" value="RimP"/>
    <property type="match status" value="1"/>
</dbReference>
<dbReference type="InterPro" id="IPR003728">
    <property type="entry name" value="Ribosome_maturation_RimP"/>
</dbReference>
<dbReference type="InterPro" id="IPR028998">
    <property type="entry name" value="RimP_C"/>
</dbReference>
<dbReference type="InterPro" id="IPR036847">
    <property type="entry name" value="RimP_C_sf"/>
</dbReference>
<dbReference type="InterPro" id="IPR028989">
    <property type="entry name" value="RimP_N"/>
</dbReference>
<dbReference type="InterPro" id="IPR035956">
    <property type="entry name" value="RimP_N_sf"/>
</dbReference>
<dbReference type="NCBIfam" id="NF000928">
    <property type="entry name" value="PRK00092.1-2"/>
    <property type="match status" value="1"/>
</dbReference>
<dbReference type="PANTHER" id="PTHR33867">
    <property type="entry name" value="RIBOSOME MATURATION FACTOR RIMP"/>
    <property type="match status" value="1"/>
</dbReference>
<dbReference type="PANTHER" id="PTHR33867:SF1">
    <property type="entry name" value="RIBOSOME MATURATION FACTOR RIMP"/>
    <property type="match status" value="1"/>
</dbReference>
<dbReference type="Pfam" id="PF17384">
    <property type="entry name" value="DUF150_C"/>
    <property type="match status" value="1"/>
</dbReference>
<dbReference type="Pfam" id="PF02576">
    <property type="entry name" value="RimP_N"/>
    <property type="match status" value="1"/>
</dbReference>
<dbReference type="SUPFAM" id="SSF74942">
    <property type="entry name" value="YhbC-like, C-terminal domain"/>
    <property type="match status" value="1"/>
</dbReference>
<dbReference type="SUPFAM" id="SSF75420">
    <property type="entry name" value="YhbC-like, N-terminal domain"/>
    <property type="match status" value="1"/>
</dbReference>
<comment type="function">
    <text evidence="1">Required for maturation of 30S ribosomal subunits.</text>
</comment>
<comment type="subcellular location">
    <subcellularLocation>
        <location evidence="1">Cytoplasm</location>
    </subcellularLocation>
</comment>
<comment type="similarity">
    <text evidence="1">Belongs to the RimP family.</text>
</comment>
<proteinExistence type="inferred from homology"/>
<organism>
    <name type="scientific">Alkaliphilus metalliredigens (strain QYMF)</name>
    <dbReference type="NCBI Taxonomy" id="293826"/>
    <lineage>
        <taxon>Bacteria</taxon>
        <taxon>Bacillati</taxon>
        <taxon>Bacillota</taxon>
        <taxon>Clostridia</taxon>
        <taxon>Peptostreptococcales</taxon>
        <taxon>Natronincolaceae</taxon>
        <taxon>Alkaliphilus</taxon>
    </lineage>
</organism>
<evidence type="ECO:0000255" key="1">
    <source>
        <dbReference type="HAMAP-Rule" id="MF_01077"/>
    </source>
</evidence>